<keyword id="KW-1185">Reference proteome</keyword>
<keyword id="KW-0687">Ribonucleoprotein</keyword>
<keyword id="KW-0689">Ribosomal protein</keyword>
<keyword id="KW-0694">RNA-binding</keyword>
<keyword id="KW-0699">rRNA-binding</keyword>
<keyword id="KW-0820">tRNA-binding</keyword>
<evidence type="ECO:0000255" key="1">
    <source>
        <dbReference type="HAMAP-Rule" id="MF_01315"/>
    </source>
</evidence>
<evidence type="ECO:0000256" key="2">
    <source>
        <dbReference type="SAM" id="MobiDB-lite"/>
    </source>
</evidence>
<evidence type="ECO:0000305" key="3"/>
<reference key="1">
    <citation type="submission" date="2006-02" db="EMBL/GenBank/DDBJ databases">
        <title>Complete sequence of chromosome of Rhodoferax ferrireducens DSM 15236.</title>
        <authorList>
            <person name="Copeland A."/>
            <person name="Lucas S."/>
            <person name="Lapidus A."/>
            <person name="Barry K."/>
            <person name="Detter J.C."/>
            <person name="Glavina del Rio T."/>
            <person name="Hammon N."/>
            <person name="Israni S."/>
            <person name="Pitluck S."/>
            <person name="Brettin T."/>
            <person name="Bruce D."/>
            <person name="Han C."/>
            <person name="Tapia R."/>
            <person name="Gilna P."/>
            <person name="Kiss H."/>
            <person name="Schmutz J."/>
            <person name="Larimer F."/>
            <person name="Land M."/>
            <person name="Kyrpides N."/>
            <person name="Ivanova N."/>
            <person name="Richardson P."/>
        </authorList>
    </citation>
    <scope>NUCLEOTIDE SEQUENCE [LARGE SCALE GENOMIC DNA]</scope>
    <source>
        <strain>ATCC BAA-621 / DSM 15236 / T118</strain>
    </source>
</reference>
<gene>
    <name evidence="1" type="primary">rpsM</name>
    <name type="ordered locus">Rfer_4220</name>
</gene>
<accession>Q21QP6</accession>
<name>RS13_ALBFT</name>
<sequence length="121" mass="13793">MARIAGINIPPQQHSEIGLTAIFGVGRNRARKICDACGIAYSKKVKDLTDLELEKIRDQVAQFTIEGDLRRETTMNIKRLMDIGCYRGFRHRRGLPMRGQRTRTNARTRKGPRKAAQSLKK</sequence>
<protein>
    <recommendedName>
        <fullName evidence="1">Small ribosomal subunit protein uS13</fullName>
    </recommendedName>
    <alternativeName>
        <fullName evidence="3">30S ribosomal protein S13</fullName>
    </alternativeName>
</protein>
<comment type="function">
    <text evidence="1">Located at the top of the head of the 30S subunit, it contacts several helices of the 16S rRNA. In the 70S ribosome it contacts the 23S rRNA (bridge B1a) and protein L5 of the 50S subunit (bridge B1b), connecting the 2 subunits; these bridges are implicated in subunit movement. Contacts the tRNAs in the A and P-sites.</text>
</comment>
<comment type="subunit">
    <text evidence="1">Part of the 30S ribosomal subunit. Forms a loose heterodimer with protein S19. Forms two bridges to the 50S subunit in the 70S ribosome.</text>
</comment>
<comment type="similarity">
    <text evidence="1">Belongs to the universal ribosomal protein uS13 family.</text>
</comment>
<organism>
    <name type="scientific">Albidiferax ferrireducens (strain ATCC BAA-621 / DSM 15236 / T118)</name>
    <name type="common">Rhodoferax ferrireducens</name>
    <dbReference type="NCBI Taxonomy" id="338969"/>
    <lineage>
        <taxon>Bacteria</taxon>
        <taxon>Pseudomonadati</taxon>
        <taxon>Pseudomonadota</taxon>
        <taxon>Betaproteobacteria</taxon>
        <taxon>Burkholderiales</taxon>
        <taxon>Comamonadaceae</taxon>
        <taxon>Rhodoferax</taxon>
    </lineage>
</organism>
<feature type="chain" id="PRO_0000306691" description="Small ribosomal subunit protein uS13">
    <location>
        <begin position="1"/>
        <end position="121"/>
    </location>
</feature>
<feature type="region of interest" description="Disordered" evidence="2">
    <location>
        <begin position="93"/>
        <end position="121"/>
    </location>
</feature>
<proteinExistence type="inferred from homology"/>
<dbReference type="EMBL" id="CP000267">
    <property type="protein sequence ID" value="ABD71907.1"/>
    <property type="molecule type" value="Genomic_DNA"/>
</dbReference>
<dbReference type="RefSeq" id="WP_011466465.1">
    <property type="nucleotide sequence ID" value="NC_007908.1"/>
</dbReference>
<dbReference type="SMR" id="Q21QP6"/>
<dbReference type="STRING" id="338969.Rfer_4220"/>
<dbReference type="KEGG" id="rfr:Rfer_4220"/>
<dbReference type="eggNOG" id="COG0099">
    <property type="taxonomic scope" value="Bacteria"/>
</dbReference>
<dbReference type="HOGENOM" id="CLU_103849_1_2_4"/>
<dbReference type="OrthoDB" id="9803610at2"/>
<dbReference type="Proteomes" id="UP000008332">
    <property type="component" value="Chromosome"/>
</dbReference>
<dbReference type="GO" id="GO:0005829">
    <property type="term" value="C:cytosol"/>
    <property type="evidence" value="ECO:0007669"/>
    <property type="project" value="TreeGrafter"/>
</dbReference>
<dbReference type="GO" id="GO:0015935">
    <property type="term" value="C:small ribosomal subunit"/>
    <property type="evidence" value="ECO:0007669"/>
    <property type="project" value="TreeGrafter"/>
</dbReference>
<dbReference type="GO" id="GO:0019843">
    <property type="term" value="F:rRNA binding"/>
    <property type="evidence" value="ECO:0007669"/>
    <property type="project" value="UniProtKB-UniRule"/>
</dbReference>
<dbReference type="GO" id="GO:0003735">
    <property type="term" value="F:structural constituent of ribosome"/>
    <property type="evidence" value="ECO:0007669"/>
    <property type="project" value="InterPro"/>
</dbReference>
<dbReference type="GO" id="GO:0000049">
    <property type="term" value="F:tRNA binding"/>
    <property type="evidence" value="ECO:0007669"/>
    <property type="project" value="UniProtKB-UniRule"/>
</dbReference>
<dbReference type="GO" id="GO:0006412">
    <property type="term" value="P:translation"/>
    <property type="evidence" value="ECO:0007669"/>
    <property type="project" value="UniProtKB-UniRule"/>
</dbReference>
<dbReference type="FunFam" id="1.10.8.50:FF:000001">
    <property type="entry name" value="30S ribosomal protein S13"/>
    <property type="match status" value="1"/>
</dbReference>
<dbReference type="FunFam" id="4.10.910.10:FF:000001">
    <property type="entry name" value="30S ribosomal protein S13"/>
    <property type="match status" value="1"/>
</dbReference>
<dbReference type="Gene3D" id="1.10.8.50">
    <property type="match status" value="1"/>
</dbReference>
<dbReference type="Gene3D" id="4.10.910.10">
    <property type="entry name" value="30s ribosomal protein s13, domain 2"/>
    <property type="match status" value="1"/>
</dbReference>
<dbReference type="HAMAP" id="MF_01315">
    <property type="entry name" value="Ribosomal_uS13"/>
    <property type="match status" value="1"/>
</dbReference>
<dbReference type="InterPro" id="IPR027437">
    <property type="entry name" value="Rbsml_uS13_C"/>
</dbReference>
<dbReference type="InterPro" id="IPR001892">
    <property type="entry name" value="Ribosomal_uS13"/>
</dbReference>
<dbReference type="InterPro" id="IPR010979">
    <property type="entry name" value="Ribosomal_uS13-like_H2TH"/>
</dbReference>
<dbReference type="InterPro" id="IPR019980">
    <property type="entry name" value="Ribosomal_uS13_bac-type"/>
</dbReference>
<dbReference type="InterPro" id="IPR018269">
    <property type="entry name" value="Ribosomal_uS13_CS"/>
</dbReference>
<dbReference type="NCBIfam" id="TIGR03631">
    <property type="entry name" value="uS13_bact"/>
    <property type="match status" value="1"/>
</dbReference>
<dbReference type="PANTHER" id="PTHR10871">
    <property type="entry name" value="30S RIBOSOMAL PROTEIN S13/40S RIBOSOMAL PROTEIN S18"/>
    <property type="match status" value="1"/>
</dbReference>
<dbReference type="PANTHER" id="PTHR10871:SF1">
    <property type="entry name" value="SMALL RIBOSOMAL SUBUNIT PROTEIN US13M"/>
    <property type="match status" value="1"/>
</dbReference>
<dbReference type="Pfam" id="PF00416">
    <property type="entry name" value="Ribosomal_S13"/>
    <property type="match status" value="1"/>
</dbReference>
<dbReference type="PIRSF" id="PIRSF002134">
    <property type="entry name" value="Ribosomal_S13"/>
    <property type="match status" value="1"/>
</dbReference>
<dbReference type="SUPFAM" id="SSF46946">
    <property type="entry name" value="S13-like H2TH domain"/>
    <property type="match status" value="1"/>
</dbReference>
<dbReference type="PROSITE" id="PS00646">
    <property type="entry name" value="RIBOSOMAL_S13_1"/>
    <property type="match status" value="1"/>
</dbReference>
<dbReference type="PROSITE" id="PS50159">
    <property type="entry name" value="RIBOSOMAL_S13_2"/>
    <property type="match status" value="1"/>
</dbReference>